<reference key="1">
    <citation type="submission" date="2009-03" db="EMBL/GenBank/DDBJ databases">
        <title>Comparison of the complete genome sequences of Rhodococcus erythropolis PR4 and Rhodococcus opacus B4.</title>
        <authorList>
            <person name="Takarada H."/>
            <person name="Sekine M."/>
            <person name="Hosoyama A."/>
            <person name="Yamada R."/>
            <person name="Fujisawa T."/>
            <person name="Omata S."/>
            <person name="Shimizu A."/>
            <person name="Tsukatani N."/>
            <person name="Tanikawa S."/>
            <person name="Fujita N."/>
            <person name="Harayama S."/>
        </authorList>
    </citation>
    <scope>NUCLEOTIDE SEQUENCE [LARGE SCALE GENOMIC DNA]</scope>
    <source>
        <strain>B4</strain>
    </source>
</reference>
<accession>C1AWW6</accession>
<sequence length="389" mass="40857">MDLFEYQAKELFAKHEVPTSAGRVTDTVAGAREIAEEIGKPVMVKAQVKVGGRGKAGGVKYSADVDAAQANAEAILGLDIKGHVVKKLLVAEASDIAEEYYISFLLDRTNRTYLAMCSVEGGVEIEVTAEENPDALAKIPVDAVKGVDLAFARSIAEAGKLPAEVLDAAAVTIQKLWEVFIKEDALLVEVNPLVRTPNDEILALDGKVTLDENAAFRQPGHEAFEDKDATDPLELKAKENDLNYVKLDGEVGIIGNGAGLVMSTLDVVAYAGEKHGGVKPANFLDIGGGASAEVMANGLDVILNDAQVKSVFVNVFGGITACDAVANGIVGALKTLGDEANKPLVVRLDGNNVEEGRRILAEAAHPLVTVVGTMDEAADKAAELAFAAK</sequence>
<gene>
    <name evidence="1" type="primary">sucC</name>
    <name type="ordered locus">ROP_56420</name>
</gene>
<evidence type="ECO:0000255" key="1">
    <source>
        <dbReference type="HAMAP-Rule" id="MF_00558"/>
    </source>
</evidence>
<organism>
    <name type="scientific">Rhodococcus opacus (strain B4)</name>
    <dbReference type="NCBI Taxonomy" id="632772"/>
    <lineage>
        <taxon>Bacteria</taxon>
        <taxon>Bacillati</taxon>
        <taxon>Actinomycetota</taxon>
        <taxon>Actinomycetes</taxon>
        <taxon>Mycobacteriales</taxon>
        <taxon>Nocardiaceae</taxon>
        <taxon>Rhodococcus</taxon>
    </lineage>
</organism>
<proteinExistence type="inferred from homology"/>
<feature type="chain" id="PRO_1000197713" description="Succinate--CoA ligase [ADP-forming] subunit beta">
    <location>
        <begin position="1"/>
        <end position="389"/>
    </location>
</feature>
<feature type="domain" description="ATP-grasp" evidence="1">
    <location>
        <begin position="9"/>
        <end position="236"/>
    </location>
</feature>
<feature type="binding site" evidence="1">
    <location>
        <position position="45"/>
    </location>
    <ligand>
        <name>ATP</name>
        <dbReference type="ChEBI" id="CHEBI:30616"/>
    </ligand>
</feature>
<feature type="binding site" evidence="1">
    <location>
        <begin position="52"/>
        <end position="54"/>
    </location>
    <ligand>
        <name>ATP</name>
        <dbReference type="ChEBI" id="CHEBI:30616"/>
    </ligand>
</feature>
<feature type="binding site" evidence="1">
    <location>
        <position position="94"/>
    </location>
    <ligand>
        <name>ATP</name>
        <dbReference type="ChEBI" id="CHEBI:30616"/>
    </ligand>
</feature>
<feature type="binding site" evidence="1">
    <location>
        <position position="99"/>
    </location>
    <ligand>
        <name>ATP</name>
        <dbReference type="ChEBI" id="CHEBI:30616"/>
    </ligand>
</feature>
<feature type="binding site" evidence="1">
    <location>
        <position position="191"/>
    </location>
    <ligand>
        <name>Mg(2+)</name>
        <dbReference type="ChEBI" id="CHEBI:18420"/>
    </ligand>
</feature>
<feature type="binding site" evidence="1">
    <location>
        <position position="205"/>
    </location>
    <ligand>
        <name>Mg(2+)</name>
        <dbReference type="ChEBI" id="CHEBI:18420"/>
    </ligand>
</feature>
<feature type="binding site" evidence="1">
    <location>
        <position position="256"/>
    </location>
    <ligand>
        <name>substrate</name>
        <note>ligand shared with subunit alpha</note>
    </ligand>
</feature>
<feature type="binding site" evidence="1">
    <location>
        <begin position="318"/>
        <end position="320"/>
    </location>
    <ligand>
        <name>substrate</name>
        <note>ligand shared with subunit alpha</note>
    </ligand>
</feature>
<dbReference type="EC" id="6.2.1.5" evidence="1"/>
<dbReference type="EMBL" id="AP011115">
    <property type="protein sequence ID" value="BAH53889.1"/>
    <property type="molecule type" value="Genomic_DNA"/>
</dbReference>
<dbReference type="RefSeq" id="WP_015889387.1">
    <property type="nucleotide sequence ID" value="NC_012522.1"/>
</dbReference>
<dbReference type="SMR" id="C1AWW6"/>
<dbReference type="STRING" id="632772.ROP_56420"/>
<dbReference type="KEGG" id="rop:ROP_56420"/>
<dbReference type="PATRIC" id="fig|632772.20.peg.5892"/>
<dbReference type="HOGENOM" id="CLU_037430_0_2_11"/>
<dbReference type="OrthoDB" id="9802602at2"/>
<dbReference type="UniPathway" id="UPA00223">
    <property type="reaction ID" value="UER00999"/>
</dbReference>
<dbReference type="Proteomes" id="UP000002212">
    <property type="component" value="Chromosome"/>
</dbReference>
<dbReference type="GO" id="GO:0005829">
    <property type="term" value="C:cytosol"/>
    <property type="evidence" value="ECO:0007669"/>
    <property type="project" value="TreeGrafter"/>
</dbReference>
<dbReference type="GO" id="GO:0042709">
    <property type="term" value="C:succinate-CoA ligase complex"/>
    <property type="evidence" value="ECO:0007669"/>
    <property type="project" value="TreeGrafter"/>
</dbReference>
<dbReference type="GO" id="GO:0005524">
    <property type="term" value="F:ATP binding"/>
    <property type="evidence" value="ECO:0007669"/>
    <property type="project" value="UniProtKB-UniRule"/>
</dbReference>
<dbReference type="GO" id="GO:0000287">
    <property type="term" value="F:magnesium ion binding"/>
    <property type="evidence" value="ECO:0007669"/>
    <property type="project" value="UniProtKB-UniRule"/>
</dbReference>
<dbReference type="GO" id="GO:0004775">
    <property type="term" value="F:succinate-CoA ligase (ADP-forming) activity"/>
    <property type="evidence" value="ECO:0007669"/>
    <property type="project" value="UniProtKB-UniRule"/>
</dbReference>
<dbReference type="GO" id="GO:0004776">
    <property type="term" value="F:succinate-CoA ligase (GDP-forming) activity"/>
    <property type="evidence" value="ECO:0007669"/>
    <property type="project" value="RHEA"/>
</dbReference>
<dbReference type="GO" id="GO:0006104">
    <property type="term" value="P:succinyl-CoA metabolic process"/>
    <property type="evidence" value="ECO:0007669"/>
    <property type="project" value="TreeGrafter"/>
</dbReference>
<dbReference type="GO" id="GO:0006099">
    <property type="term" value="P:tricarboxylic acid cycle"/>
    <property type="evidence" value="ECO:0007669"/>
    <property type="project" value="UniProtKB-UniRule"/>
</dbReference>
<dbReference type="FunFam" id="3.30.1490.20:FF:000014">
    <property type="entry name" value="Succinate--CoA ligase [ADP-forming] subunit beta"/>
    <property type="match status" value="1"/>
</dbReference>
<dbReference type="FunFam" id="3.30.470.20:FF:000002">
    <property type="entry name" value="Succinate--CoA ligase [ADP-forming] subunit beta"/>
    <property type="match status" value="1"/>
</dbReference>
<dbReference type="FunFam" id="3.40.50.261:FF:000007">
    <property type="entry name" value="Succinate--CoA ligase [ADP-forming] subunit beta"/>
    <property type="match status" value="1"/>
</dbReference>
<dbReference type="Gene3D" id="3.30.1490.20">
    <property type="entry name" value="ATP-grasp fold, A domain"/>
    <property type="match status" value="1"/>
</dbReference>
<dbReference type="Gene3D" id="3.30.470.20">
    <property type="entry name" value="ATP-grasp fold, B domain"/>
    <property type="match status" value="1"/>
</dbReference>
<dbReference type="Gene3D" id="3.40.50.261">
    <property type="entry name" value="Succinyl-CoA synthetase domains"/>
    <property type="match status" value="1"/>
</dbReference>
<dbReference type="HAMAP" id="MF_00558">
    <property type="entry name" value="Succ_CoA_beta"/>
    <property type="match status" value="1"/>
</dbReference>
<dbReference type="InterPro" id="IPR011761">
    <property type="entry name" value="ATP-grasp"/>
</dbReference>
<dbReference type="InterPro" id="IPR013650">
    <property type="entry name" value="ATP-grasp_succ-CoA_synth-type"/>
</dbReference>
<dbReference type="InterPro" id="IPR013815">
    <property type="entry name" value="ATP_grasp_subdomain_1"/>
</dbReference>
<dbReference type="InterPro" id="IPR017866">
    <property type="entry name" value="Succ-CoA_synthase_bsu_CS"/>
</dbReference>
<dbReference type="InterPro" id="IPR005811">
    <property type="entry name" value="SUCC_ACL_C"/>
</dbReference>
<dbReference type="InterPro" id="IPR005809">
    <property type="entry name" value="Succ_CoA_ligase-like_bsu"/>
</dbReference>
<dbReference type="InterPro" id="IPR016102">
    <property type="entry name" value="Succinyl-CoA_synth-like"/>
</dbReference>
<dbReference type="NCBIfam" id="NF001913">
    <property type="entry name" value="PRK00696.1"/>
    <property type="match status" value="1"/>
</dbReference>
<dbReference type="NCBIfam" id="TIGR01016">
    <property type="entry name" value="sucCoAbeta"/>
    <property type="match status" value="1"/>
</dbReference>
<dbReference type="PANTHER" id="PTHR11815:SF10">
    <property type="entry name" value="SUCCINATE--COA LIGASE [GDP-FORMING] SUBUNIT BETA, MITOCHONDRIAL"/>
    <property type="match status" value="1"/>
</dbReference>
<dbReference type="PANTHER" id="PTHR11815">
    <property type="entry name" value="SUCCINYL-COA SYNTHETASE BETA CHAIN"/>
    <property type="match status" value="1"/>
</dbReference>
<dbReference type="Pfam" id="PF08442">
    <property type="entry name" value="ATP-grasp_2"/>
    <property type="match status" value="1"/>
</dbReference>
<dbReference type="Pfam" id="PF00549">
    <property type="entry name" value="Ligase_CoA"/>
    <property type="match status" value="1"/>
</dbReference>
<dbReference type="PIRSF" id="PIRSF001554">
    <property type="entry name" value="SucCS_beta"/>
    <property type="match status" value="1"/>
</dbReference>
<dbReference type="SUPFAM" id="SSF56059">
    <property type="entry name" value="Glutathione synthetase ATP-binding domain-like"/>
    <property type="match status" value="1"/>
</dbReference>
<dbReference type="SUPFAM" id="SSF52210">
    <property type="entry name" value="Succinyl-CoA synthetase domains"/>
    <property type="match status" value="1"/>
</dbReference>
<dbReference type="PROSITE" id="PS50975">
    <property type="entry name" value="ATP_GRASP"/>
    <property type="match status" value="1"/>
</dbReference>
<dbReference type="PROSITE" id="PS01217">
    <property type="entry name" value="SUCCINYL_COA_LIG_3"/>
    <property type="match status" value="1"/>
</dbReference>
<keyword id="KW-0067">ATP-binding</keyword>
<keyword id="KW-0436">Ligase</keyword>
<keyword id="KW-0460">Magnesium</keyword>
<keyword id="KW-0479">Metal-binding</keyword>
<keyword id="KW-0547">Nucleotide-binding</keyword>
<keyword id="KW-0816">Tricarboxylic acid cycle</keyword>
<name>SUCC_RHOOB</name>
<comment type="function">
    <text evidence="1">Succinyl-CoA synthetase functions in the citric acid cycle (TCA), coupling the hydrolysis of succinyl-CoA to the synthesis of either ATP or GTP and thus represents the only step of substrate-level phosphorylation in the TCA. The beta subunit provides nucleotide specificity of the enzyme and binds the substrate succinate, while the binding sites for coenzyme A and phosphate are found in the alpha subunit.</text>
</comment>
<comment type="catalytic activity">
    <reaction evidence="1">
        <text>succinate + ATP + CoA = succinyl-CoA + ADP + phosphate</text>
        <dbReference type="Rhea" id="RHEA:17661"/>
        <dbReference type="ChEBI" id="CHEBI:30031"/>
        <dbReference type="ChEBI" id="CHEBI:30616"/>
        <dbReference type="ChEBI" id="CHEBI:43474"/>
        <dbReference type="ChEBI" id="CHEBI:57287"/>
        <dbReference type="ChEBI" id="CHEBI:57292"/>
        <dbReference type="ChEBI" id="CHEBI:456216"/>
        <dbReference type="EC" id="6.2.1.5"/>
    </reaction>
    <physiologicalReaction direction="right-to-left" evidence="1">
        <dbReference type="Rhea" id="RHEA:17663"/>
    </physiologicalReaction>
</comment>
<comment type="catalytic activity">
    <reaction evidence="1">
        <text>GTP + succinate + CoA = succinyl-CoA + GDP + phosphate</text>
        <dbReference type="Rhea" id="RHEA:22120"/>
        <dbReference type="ChEBI" id="CHEBI:30031"/>
        <dbReference type="ChEBI" id="CHEBI:37565"/>
        <dbReference type="ChEBI" id="CHEBI:43474"/>
        <dbReference type="ChEBI" id="CHEBI:57287"/>
        <dbReference type="ChEBI" id="CHEBI:57292"/>
        <dbReference type="ChEBI" id="CHEBI:58189"/>
    </reaction>
    <physiologicalReaction direction="right-to-left" evidence="1">
        <dbReference type="Rhea" id="RHEA:22122"/>
    </physiologicalReaction>
</comment>
<comment type="cofactor">
    <cofactor evidence="1">
        <name>Mg(2+)</name>
        <dbReference type="ChEBI" id="CHEBI:18420"/>
    </cofactor>
    <text evidence="1">Binds 1 Mg(2+) ion per subunit.</text>
</comment>
<comment type="pathway">
    <text evidence="1">Carbohydrate metabolism; tricarboxylic acid cycle; succinate from succinyl-CoA (ligase route): step 1/1.</text>
</comment>
<comment type="subunit">
    <text evidence="1">Heterotetramer of two alpha and two beta subunits.</text>
</comment>
<comment type="similarity">
    <text evidence="1">Belongs to the succinate/malate CoA ligase beta subunit family.</text>
</comment>
<protein>
    <recommendedName>
        <fullName evidence="1">Succinate--CoA ligase [ADP-forming] subunit beta</fullName>
        <ecNumber evidence="1">6.2.1.5</ecNumber>
    </recommendedName>
    <alternativeName>
        <fullName evidence="1">Succinyl-CoA synthetase subunit beta</fullName>
        <shortName evidence="1">SCS-beta</shortName>
    </alternativeName>
</protein>